<protein>
    <recommendedName>
        <fullName evidence="1">Citrate lyase acyl carrier protein</fullName>
    </recommendedName>
    <alternativeName>
        <fullName evidence="1">Citrate lyase gamma chain</fullName>
    </alternativeName>
</protein>
<accession>Q1JGR0</accession>
<name>CITD_STRPD</name>
<evidence type="ECO:0000255" key="1">
    <source>
        <dbReference type="HAMAP-Rule" id="MF_00805"/>
    </source>
</evidence>
<reference key="1">
    <citation type="journal article" date="2006" name="Proc. Natl. Acad. Sci. U.S.A.">
        <title>Molecular genetic anatomy of inter- and intraserotype variation in the human bacterial pathogen group A Streptococcus.</title>
        <authorList>
            <person name="Beres S.B."/>
            <person name="Richter E.W."/>
            <person name="Nagiec M.J."/>
            <person name="Sumby P."/>
            <person name="Porcella S.F."/>
            <person name="DeLeo F.R."/>
            <person name="Musser J.M."/>
        </authorList>
    </citation>
    <scope>NUCLEOTIDE SEQUENCE [LARGE SCALE GENOMIC DNA]</scope>
    <source>
        <strain>MGAS10270</strain>
    </source>
</reference>
<sequence length="102" mass="11193">MDIKQTAVAGSLESSDLMITVSPNDEQTITITLDSSVEKQFGNHIRQLIHQTLVNLKVTAAKVEAVDKGALDCTIQARTIAAVHRAAGIDQYDWKEIDSWNV</sequence>
<gene>
    <name evidence="1" type="primary">citD</name>
    <name type="ordered locus">MGAS10270_Spy1019</name>
</gene>
<organism>
    <name type="scientific">Streptococcus pyogenes serotype M2 (strain MGAS10270)</name>
    <dbReference type="NCBI Taxonomy" id="370552"/>
    <lineage>
        <taxon>Bacteria</taxon>
        <taxon>Bacillati</taxon>
        <taxon>Bacillota</taxon>
        <taxon>Bacilli</taxon>
        <taxon>Lactobacillales</taxon>
        <taxon>Streptococcaceae</taxon>
        <taxon>Streptococcus</taxon>
    </lineage>
</organism>
<proteinExistence type="inferred from homology"/>
<keyword id="KW-0963">Cytoplasm</keyword>
<keyword id="KW-0597">Phosphoprotein</keyword>
<comment type="function">
    <text evidence="1">Covalent carrier of the coenzyme of citrate lyase.</text>
</comment>
<comment type="subunit">
    <text evidence="1">Oligomer with a subunit composition of (alpha,beta,gamma)6.</text>
</comment>
<comment type="subcellular location">
    <subcellularLocation>
        <location evidence="1">Cytoplasm</location>
    </subcellularLocation>
</comment>
<comment type="similarity">
    <text evidence="1">Belongs to the CitD family.</text>
</comment>
<dbReference type="EMBL" id="CP000260">
    <property type="protein sequence ID" value="ABF34084.1"/>
    <property type="molecule type" value="Genomic_DNA"/>
</dbReference>
<dbReference type="SMR" id="Q1JGR0"/>
<dbReference type="KEGG" id="sph:MGAS10270_Spy1019"/>
<dbReference type="HOGENOM" id="CLU_158489_0_0_9"/>
<dbReference type="Proteomes" id="UP000002436">
    <property type="component" value="Chromosome"/>
</dbReference>
<dbReference type="GO" id="GO:0005737">
    <property type="term" value="C:cytoplasm"/>
    <property type="evidence" value="ECO:0007669"/>
    <property type="project" value="UniProtKB-SubCell"/>
</dbReference>
<dbReference type="HAMAP" id="MF_00805">
    <property type="entry name" value="CitD"/>
    <property type="match status" value="1"/>
</dbReference>
<dbReference type="InterPro" id="IPR006495">
    <property type="entry name" value="CitD"/>
</dbReference>
<dbReference type="InterPro" id="IPR023439">
    <property type="entry name" value="Mal_deCO2ase/Cit_lyase_ACP"/>
</dbReference>
<dbReference type="NCBIfam" id="TIGR01608">
    <property type="entry name" value="citD"/>
    <property type="match status" value="1"/>
</dbReference>
<dbReference type="NCBIfam" id="NF009726">
    <property type="entry name" value="PRK13253.1"/>
    <property type="match status" value="1"/>
</dbReference>
<dbReference type="Pfam" id="PF06857">
    <property type="entry name" value="ACP"/>
    <property type="match status" value="1"/>
</dbReference>
<dbReference type="PIRSF" id="PIRSF002736">
    <property type="entry name" value="Citrt_lyas_gamma"/>
    <property type="match status" value="1"/>
</dbReference>
<feature type="chain" id="PRO_1000047082" description="Citrate lyase acyl carrier protein">
    <location>
        <begin position="1"/>
        <end position="102"/>
    </location>
</feature>
<feature type="modified residue" description="O-(phosphoribosyl dephospho-coenzyme A)serine" evidence="1">
    <location>
        <position position="14"/>
    </location>
</feature>